<keyword id="KW-1185">Reference proteome</keyword>
<proteinExistence type="inferred from homology"/>
<accession>Q83KD7</accession>
<accession>Q7C0T9</accession>
<organism>
    <name type="scientific">Shigella flexneri</name>
    <dbReference type="NCBI Taxonomy" id="623"/>
    <lineage>
        <taxon>Bacteria</taxon>
        <taxon>Pseudomonadati</taxon>
        <taxon>Pseudomonadota</taxon>
        <taxon>Gammaproteobacteria</taxon>
        <taxon>Enterobacterales</taxon>
        <taxon>Enterobacteriaceae</taxon>
        <taxon>Shigella</taxon>
    </lineage>
</organism>
<feature type="chain" id="PRO_0000201800" description="UPF0352 protein YejL">
    <location>
        <begin position="1"/>
        <end position="75"/>
    </location>
</feature>
<dbReference type="EMBL" id="AE005674">
    <property type="protein sequence ID" value="AAN43793.1"/>
    <property type="molecule type" value="Genomic_DNA"/>
</dbReference>
<dbReference type="EMBL" id="AE014073">
    <property type="protein sequence ID" value="AAP17610.1"/>
    <property type="molecule type" value="Genomic_DNA"/>
</dbReference>
<dbReference type="RefSeq" id="NP_708086.1">
    <property type="nucleotide sequence ID" value="NC_004337.2"/>
</dbReference>
<dbReference type="RefSeq" id="WP_001135673.1">
    <property type="nucleotide sequence ID" value="NZ_WPGW01000022.1"/>
</dbReference>
<dbReference type="SMR" id="Q83KD7"/>
<dbReference type="STRING" id="198214.SF2274"/>
<dbReference type="PaxDb" id="198214-SF2274"/>
<dbReference type="GeneID" id="1027288"/>
<dbReference type="KEGG" id="sfl:SF2274"/>
<dbReference type="KEGG" id="sfx:S2403"/>
<dbReference type="PATRIC" id="fig|198214.7.peg.2724"/>
<dbReference type="HOGENOM" id="CLU_175457_0_0_6"/>
<dbReference type="Proteomes" id="UP000001006">
    <property type="component" value="Chromosome"/>
</dbReference>
<dbReference type="Proteomes" id="UP000002673">
    <property type="component" value="Chromosome"/>
</dbReference>
<dbReference type="FunFam" id="1.10.3390.10:FF:000001">
    <property type="entry name" value="UPF0352 protein YejL"/>
    <property type="match status" value="1"/>
</dbReference>
<dbReference type="Gene3D" id="1.10.3390.10">
    <property type="entry name" value="YejL-like"/>
    <property type="match status" value="1"/>
</dbReference>
<dbReference type="HAMAP" id="MF_00816">
    <property type="entry name" value="UPF0352"/>
    <property type="match status" value="1"/>
</dbReference>
<dbReference type="InterPro" id="IPR009857">
    <property type="entry name" value="UPF0352"/>
</dbReference>
<dbReference type="InterPro" id="IPR023202">
    <property type="entry name" value="YejL_sf"/>
</dbReference>
<dbReference type="NCBIfam" id="NF010242">
    <property type="entry name" value="PRK13689.1"/>
    <property type="match status" value="1"/>
</dbReference>
<dbReference type="Pfam" id="PF07208">
    <property type="entry name" value="DUF1414"/>
    <property type="match status" value="1"/>
</dbReference>
<dbReference type="PIRSF" id="PIRSF006188">
    <property type="entry name" value="UCP006188"/>
    <property type="match status" value="1"/>
</dbReference>
<dbReference type="SUPFAM" id="SSF158651">
    <property type="entry name" value="YejL-like"/>
    <property type="match status" value="1"/>
</dbReference>
<evidence type="ECO:0000255" key="1">
    <source>
        <dbReference type="HAMAP-Rule" id="MF_00816"/>
    </source>
</evidence>
<name>YEJL_SHIFL</name>
<gene>
    <name evidence="1" type="primary">yejL</name>
    <name type="ordered locus">SF2274</name>
    <name type="ordered locus">S2403</name>
</gene>
<protein>
    <recommendedName>
        <fullName evidence="1">UPF0352 protein YejL</fullName>
    </recommendedName>
</protein>
<sequence length="75" mass="8218">MPQISRYSNEQVEQLLAELLNVLEKHKAPTDLSLMVLGNMVTNLINTSIAPAQRQAIANSFASALQSSINEDKAH</sequence>
<reference key="1">
    <citation type="journal article" date="2002" name="Nucleic Acids Res.">
        <title>Genome sequence of Shigella flexneri 2a: insights into pathogenicity through comparison with genomes of Escherichia coli K12 and O157.</title>
        <authorList>
            <person name="Jin Q."/>
            <person name="Yuan Z."/>
            <person name="Xu J."/>
            <person name="Wang Y."/>
            <person name="Shen Y."/>
            <person name="Lu W."/>
            <person name="Wang J."/>
            <person name="Liu H."/>
            <person name="Yang J."/>
            <person name="Yang F."/>
            <person name="Zhang X."/>
            <person name="Zhang J."/>
            <person name="Yang G."/>
            <person name="Wu H."/>
            <person name="Qu D."/>
            <person name="Dong J."/>
            <person name="Sun L."/>
            <person name="Xue Y."/>
            <person name="Zhao A."/>
            <person name="Gao Y."/>
            <person name="Zhu J."/>
            <person name="Kan B."/>
            <person name="Ding K."/>
            <person name="Chen S."/>
            <person name="Cheng H."/>
            <person name="Yao Z."/>
            <person name="He B."/>
            <person name="Chen R."/>
            <person name="Ma D."/>
            <person name="Qiang B."/>
            <person name="Wen Y."/>
            <person name="Hou Y."/>
            <person name="Yu J."/>
        </authorList>
    </citation>
    <scope>NUCLEOTIDE SEQUENCE [LARGE SCALE GENOMIC DNA]</scope>
    <source>
        <strain>301 / Serotype 2a</strain>
    </source>
</reference>
<reference key="2">
    <citation type="journal article" date="2003" name="Infect. Immun.">
        <title>Complete genome sequence and comparative genomics of Shigella flexneri serotype 2a strain 2457T.</title>
        <authorList>
            <person name="Wei J."/>
            <person name="Goldberg M.B."/>
            <person name="Burland V."/>
            <person name="Venkatesan M.M."/>
            <person name="Deng W."/>
            <person name="Fournier G."/>
            <person name="Mayhew G.F."/>
            <person name="Plunkett G. III"/>
            <person name="Rose D.J."/>
            <person name="Darling A."/>
            <person name="Mau B."/>
            <person name="Perna N.T."/>
            <person name="Payne S.M."/>
            <person name="Runyen-Janecky L.J."/>
            <person name="Zhou S."/>
            <person name="Schwartz D.C."/>
            <person name="Blattner F.R."/>
        </authorList>
    </citation>
    <scope>NUCLEOTIDE SEQUENCE [LARGE SCALE GENOMIC DNA]</scope>
    <source>
        <strain>ATCC 700930 / 2457T / Serotype 2a</strain>
    </source>
</reference>
<comment type="similarity">
    <text evidence="1">Belongs to the UPF0352 family.</text>
</comment>